<organism>
    <name type="scientific">Buchnera aphidicola subsp. Diuraphis noxia</name>
    <dbReference type="NCBI Taxonomy" id="118101"/>
    <lineage>
        <taxon>Bacteria</taxon>
        <taxon>Pseudomonadati</taxon>
        <taxon>Pseudomonadota</taxon>
        <taxon>Gammaproteobacteria</taxon>
        <taxon>Enterobacterales</taxon>
        <taxon>Erwiniaceae</taxon>
        <taxon>Buchnera</taxon>
    </lineage>
</organism>
<protein>
    <recommendedName>
        <fullName evidence="1">Histidinol-phosphate aminotransferase</fullName>
        <ecNumber evidence="1">2.6.1.9</ecNumber>
    </recommendedName>
    <alternativeName>
        <fullName evidence="1">Imidazole acetol-phosphate transaminase</fullName>
    </alternativeName>
</protein>
<name>HIS8_BUCDN</name>
<gene>
    <name evidence="1" type="primary">hisC</name>
</gene>
<keyword id="KW-0028">Amino-acid biosynthesis</keyword>
<keyword id="KW-0032">Aminotransferase</keyword>
<keyword id="KW-0368">Histidine biosynthesis</keyword>
<keyword id="KW-0663">Pyridoxal phosphate</keyword>
<keyword id="KW-0808">Transferase</keyword>
<sequence>MINSLIKLARINVQKLQPYQSARRIGGQHGDVWLNANESPVSVELSFKKKLLNRYPECQPIDLISAYADYVRLSTNQILVTRGADEGIELLIRAFCESGKDAIIYCPPTYDMYRVNAEIYNIKYKEVPTIKNTWQLDLLNIKLNLNSVKLIYICNPNNPTGSTCSKKDLFDLLEMTLNTSLVVVDEAYIEFLPKESMTLYLKKYPNLVILRTLSKAFALAGIRCGFVLAQKEIINILNKIISPYPISIPTASIALESLHKNYIKLMQNRVLDLNANRVWLINKLKKISSVKKIFQSNTNYILVQFFMSEEIFQMLWEKGIIVRNQDHKINLKQCLRITVGTHLECSRLIEEIKFFSKKYLKGV</sequence>
<comment type="catalytic activity">
    <reaction evidence="1">
        <text>L-histidinol phosphate + 2-oxoglutarate = 3-(imidazol-4-yl)-2-oxopropyl phosphate + L-glutamate</text>
        <dbReference type="Rhea" id="RHEA:23744"/>
        <dbReference type="ChEBI" id="CHEBI:16810"/>
        <dbReference type="ChEBI" id="CHEBI:29985"/>
        <dbReference type="ChEBI" id="CHEBI:57766"/>
        <dbReference type="ChEBI" id="CHEBI:57980"/>
        <dbReference type="EC" id="2.6.1.9"/>
    </reaction>
</comment>
<comment type="cofactor">
    <cofactor evidence="1">
        <name>pyridoxal 5'-phosphate</name>
        <dbReference type="ChEBI" id="CHEBI:597326"/>
    </cofactor>
</comment>
<comment type="pathway">
    <text evidence="1">Amino-acid biosynthesis; L-histidine biosynthesis; L-histidine from 5-phospho-alpha-D-ribose 1-diphosphate: step 7/9.</text>
</comment>
<comment type="subunit">
    <text evidence="1">Homodimer.</text>
</comment>
<comment type="similarity">
    <text evidence="1">Belongs to the class-II pyridoxal-phosphate-dependent aminotransferase family. Histidinol-phosphate aminotransferase subfamily.</text>
</comment>
<accession>Q84I53</accession>
<proteinExistence type="inferred from homology"/>
<dbReference type="EC" id="2.6.1.9" evidence="1"/>
<dbReference type="EMBL" id="AF465530">
    <property type="protein sequence ID" value="AAO33045.1"/>
    <property type="molecule type" value="Genomic_DNA"/>
</dbReference>
<dbReference type="RefSeq" id="WP_075433162.1">
    <property type="nucleotide sequence ID" value="NZ_CP013259.1"/>
</dbReference>
<dbReference type="SMR" id="Q84I53"/>
<dbReference type="STRING" id="118101.ATN01_00495"/>
<dbReference type="OrthoDB" id="9813612at2"/>
<dbReference type="UniPathway" id="UPA00031">
    <property type="reaction ID" value="UER00012"/>
</dbReference>
<dbReference type="GO" id="GO:0004400">
    <property type="term" value="F:histidinol-phosphate transaminase activity"/>
    <property type="evidence" value="ECO:0007669"/>
    <property type="project" value="UniProtKB-UniRule"/>
</dbReference>
<dbReference type="GO" id="GO:0030170">
    <property type="term" value="F:pyridoxal phosphate binding"/>
    <property type="evidence" value="ECO:0007669"/>
    <property type="project" value="InterPro"/>
</dbReference>
<dbReference type="GO" id="GO:0000105">
    <property type="term" value="P:L-histidine biosynthetic process"/>
    <property type="evidence" value="ECO:0007669"/>
    <property type="project" value="UniProtKB-UniRule"/>
</dbReference>
<dbReference type="CDD" id="cd00609">
    <property type="entry name" value="AAT_like"/>
    <property type="match status" value="1"/>
</dbReference>
<dbReference type="Gene3D" id="3.90.1150.10">
    <property type="entry name" value="Aspartate Aminotransferase, domain 1"/>
    <property type="match status" value="1"/>
</dbReference>
<dbReference type="Gene3D" id="3.40.640.10">
    <property type="entry name" value="Type I PLP-dependent aspartate aminotransferase-like (Major domain)"/>
    <property type="match status" value="1"/>
</dbReference>
<dbReference type="HAMAP" id="MF_01023">
    <property type="entry name" value="HisC_aminotrans_2"/>
    <property type="match status" value="1"/>
</dbReference>
<dbReference type="InterPro" id="IPR001917">
    <property type="entry name" value="Aminotrans_II_pyridoxalP_BS"/>
</dbReference>
<dbReference type="InterPro" id="IPR004839">
    <property type="entry name" value="Aminotransferase_I/II_large"/>
</dbReference>
<dbReference type="InterPro" id="IPR005861">
    <property type="entry name" value="HisP_aminotrans"/>
</dbReference>
<dbReference type="InterPro" id="IPR015424">
    <property type="entry name" value="PyrdxlP-dep_Trfase"/>
</dbReference>
<dbReference type="InterPro" id="IPR015421">
    <property type="entry name" value="PyrdxlP-dep_Trfase_major"/>
</dbReference>
<dbReference type="InterPro" id="IPR015422">
    <property type="entry name" value="PyrdxlP-dep_Trfase_small"/>
</dbReference>
<dbReference type="NCBIfam" id="TIGR01141">
    <property type="entry name" value="hisC"/>
    <property type="match status" value="1"/>
</dbReference>
<dbReference type="PANTHER" id="PTHR42885:SF2">
    <property type="entry name" value="HISTIDINOL-PHOSPHATE AMINOTRANSFERASE"/>
    <property type="match status" value="1"/>
</dbReference>
<dbReference type="PANTHER" id="PTHR42885">
    <property type="entry name" value="HISTIDINOL-PHOSPHATE AMINOTRANSFERASE-RELATED"/>
    <property type="match status" value="1"/>
</dbReference>
<dbReference type="Pfam" id="PF00155">
    <property type="entry name" value="Aminotran_1_2"/>
    <property type="match status" value="1"/>
</dbReference>
<dbReference type="SUPFAM" id="SSF53383">
    <property type="entry name" value="PLP-dependent transferases"/>
    <property type="match status" value="1"/>
</dbReference>
<dbReference type="PROSITE" id="PS00599">
    <property type="entry name" value="AA_TRANSFER_CLASS_2"/>
    <property type="match status" value="1"/>
</dbReference>
<reference key="1">
    <citation type="submission" date="2002-01" db="EMBL/GenBank/DDBJ databases">
        <title>Levels of selection on genes of mutualistic endosymbionts.</title>
        <authorList>
            <person name="Moran N.A."/>
            <person name="Mira A."/>
        </authorList>
    </citation>
    <scope>NUCLEOTIDE SEQUENCE [GENOMIC DNA]</scope>
</reference>
<evidence type="ECO:0000255" key="1">
    <source>
        <dbReference type="HAMAP-Rule" id="MF_01023"/>
    </source>
</evidence>
<feature type="chain" id="PRO_0000153331" description="Histidinol-phosphate aminotransferase">
    <location>
        <begin position="1"/>
        <end position="363"/>
    </location>
</feature>
<feature type="modified residue" description="N6-(pyridoxal phosphate)lysine" evidence="1">
    <location>
        <position position="215"/>
    </location>
</feature>